<gene>
    <name evidence="7" type="primary">KIN5B</name>
    <name evidence="7" type="ordered locus">Os03g0279832</name>
    <name evidence="7" type="ordered locus">LOC_Os03g17164</name>
    <name evidence="8" type="ORF">OsJ_10359</name>
</gene>
<dbReference type="EMBL" id="AP014959">
    <property type="status" value="NOT_ANNOTATED_CDS"/>
    <property type="molecule type" value="Genomic_DNA"/>
</dbReference>
<dbReference type="EMBL" id="CM000140">
    <property type="protein sequence ID" value="EEE58808.1"/>
    <property type="status" value="ALT_SEQ"/>
    <property type="molecule type" value="Genomic_DNA"/>
</dbReference>
<dbReference type="SMR" id="B9F7C8"/>
<dbReference type="FunCoup" id="B9F7C8">
    <property type="interactions" value="1568"/>
</dbReference>
<dbReference type="STRING" id="39947.B9F7C8"/>
<dbReference type="PaxDb" id="39947-B9F7C8"/>
<dbReference type="GeneID" id="107278712"/>
<dbReference type="KEGG" id="osa:107278712"/>
<dbReference type="InParanoid" id="B9F7C8"/>
<dbReference type="OrthoDB" id="3176171at2759"/>
<dbReference type="Proteomes" id="UP000007752">
    <property type="component" value="Chromosome 3"/>
</dbReference>
<dbReference type="Proteomes" id="UP000059680">
    <property type="component" value="Chromosome 3"/>
</dbReference>
<dbReference type="GO" id="GO:0005737">
    <property type="term" value="C:cytoplasm"/>
    <property type="evidence" value="ECO:0007669"/>
    <property type="project" value="UniProtKB-KW"/>
</dbReference>
<dbReference type="GO" id="GO:0072686">
    <property type="term" value="C:mitotic spindle"/>
    <property type="evidence" value="ECO:0000318"/>
    <property type="project" value="GO_Central"/>
</dbReference>
<dbReference type="GO" id="GO:0005876">
    <property type="term" value="C:spindle microtubule"/>
    <property type="evidence" value="ECO:0000318"/>
    <property type="project" value="GO_Central"/>
</dbReference>
<dbReference type="GO" id="GO:0005524">
    <property type="term" value="F:ATP binding"/>
    <property type="evidence" value="ECO:0007669"/>
    <property type="project" value="UniProtKB-KW"/>
</dbReference>
<dbReference type="GO" id="GO:0008017">
    <property type="term" value="F:microtubule binding"/>
    <property type="evidence" value="ECO:0007669"/>
    <property type="project" value="InterPro"/>
</dbReference>
<dbReference type="GO" id="GO:0008574">
    <property type="term" value="F:plus-end-directed microtubule motor activity"/>
    <property type="evidence" value="ECO:0000318"/>
    <property type="project" value="GO_Central"/>
</dbReference>
<dbReference type="GO" id="GO:0007018">
    <property type="term" value="P:microtubule-based movement"/>
    <property type="evidence" value="ECO:0007669"/>
    <property type="project" value="InterPro"/>
</dbReference>
<dbReference type="GO" id="GO:0090307">
    <property type="term" value="P:mitotic spindle assembly"/>
    <property type="evidence" value="ECO:0000318"/>
    <property type="project" value="GO_Central"/>
</dbReference>
<dbReference type="GO" id="GO:0051231">
    <property type="term" value="P:spindle elongation"/>
    <property type="evidence" value="ECO:0000318"/>
    <property type="project" value="GO_Central"/>
</dbReference>
<dbReference type="CDD" id="cd01364">
    <property type="entry name" value="KISc_BimC_Eg5"/>
    <property type="match status" value="1"/>
</dbReference>
<dbReference type="FunFam" id="3.40.850.10:FF:000019">
    <property type="entry name" value="Kinesin-like protein KIN-5D"/>
    <property type="match status" value="1"/>
</dbReference>
<dbReference type="Gene3D" id="3.40.850.10">
    <property type="entry name" value="Kinesin motor domain"/>
    <property type="match status" value="1"/>
</dbReference>
<dbReference type="InterPro" id="IPR047149">
    <property type="entry name" value="KIF11-like"/>
</dbReference>
<dbReference type="InterPro" id="IPR047241">
    <property type="entry name" value="KIF11-like_kin_motor_dom"/>
</dbReference>
<dbReference type="InterPro" id="IPR019821">
    <property type="entry name" value="Kinesin_motor_CS"/>
</dbReference>
<dbReference type="InterPro" id="IPR001752">
    <property type="entry name" value="Kinesin_motor_dom"/>
</dbReference>
<dbReference type="InterPro" id="IPR036961">
    <property type="entry name" value="Kinesin_motor_dom_sf"/>
</dbReference>
<dbReference type="InterPro" id="IPR027417">
    <property type="entry name" value="P-loop_NTPase"/>
</dbReference>
<dbReference type="PANTHER" id="PTHR47970">
    <property type="entry name" value="KINESIN-LIKE PROTEIN KIF11"/>
    <property type="match status" value="1"/>
</dbReference>
<dbReference type="PANTHER" id="PTHR47970:SF32">
    <property type="entry name" value="KINESIN-LIKE PROTEIN KIN-5B"/>
    <property type="match status" value="1"/>
</dbReference>
<dbReference type="Pfam" id="PF00225">
    <property type="entry name" value="Kinesin"/>
    <property type="match status" value="1"/>
</dbReference>
<dbReference type="PRINTS" id="PR00380">
    <property type="entry name" value="KINESINHEAVY"/>
</dbReference>
<dbReference type="SMART" id="SM00129">
    <property type="entry name" value="KISc"/>
    <property type="match status" value="1"/>
</dbReference>
<dbReference type="SUPFAM" id="SSF52540">
    <property type="entry name" value="P-loop containing nucleoside triphosphate hydrolases"/>
    <property type="match status" value="1"/>
</dbReference>
<dbReference type="PROSITE" id="PS00411">
    <property type="entry name" value="KINESIN_MOTOR_1"/>
    <property type="match status" value="1"/>
</dbReference>
<dbReference type="PROSITE" id="PS50067">
    <property type="entry name" value="KINESIN_MOTOR_2"/>
    <property type="match status" value="1"/>
</dbReference>
<evidence type="ECO:0000250" key="1">
    <source>
        <dbReference type="UniProtKB" id="F4IIS5"/>
    </source>
</evidence>
<evidence type="ECO:0000250" key="2">
    <source>
        <dbReference type="UniProtKB" id="O23826"/>
    </source>
</evidence>
<evidence type="ECO:0000255" key="3"/>
<evidence type="ECO:0000255" key="4">
    <source>
        <dbReference type="PROSITE-ProRule" id="PRU00283"/>
    </source>
</evidence>
<evidence type="ECO:0000256" key="5">
    <source>
        <dbReference type="SAM" id="MobiDB-lite"/>
    </source>
</evidence>
<evidence type="ECO:0000303" key="6">
    <source>
    </source>
</evidence>
<evidence type="ECO:0000305" key="7"/>
<evidence type="ECO:0000312" key="8">
    <source>
        <dbReference type="EMBL" id="EEE58808.1"/>
    </source>
</evidence>
<feature type="chain" id="PRO_0000436272" description="Kinesin-like protein KIN-5B">
    <location>
        <begin position="1"/>
        <end position="1038"/>
    </location>
</feature>
<feature type="domain" description="Kinesin motor" evidence="4">
    <location>
        <begin position="69"/>
        <end position="410"/>
    </location>
</feature>
<feature type="region of interest" description="Disordered" evidence="5">
    <location>
        <begin position="1"/>
        <end position="63"/>
    </location>
</feature>
<feature type="region of interest" description="Disordered" evidence="5">
    <location>
        <begin position="1013"/>
        <end position="1038"/>
    </location>
</feature>
<feature type="coiled-coil region" evidence="3">
    <location>
        <begin position="453"/>
        <end position="502"/>
    </location>
</feature>
<feature type="compositionally biased region" description="Basic and acidic residues" evidence="5">
    <location>
        <begin position="24"/>
        <end position="34"/>
    </location>
</feature>
<feature type="compositionally biased region" description="Gly residues" evidence="5">
    <location>
        <begin position="49"/>
        <end position="61"/>
    </location>
</feature>
<feature type="binding site" evidence="4">
    <location>
        <begin position="154"/>
        <end position="161"/>
    </location>
    <ligand>
        <name>ATP</name>
        <dbReference type="ChEBI" id="CHEBI:30616"/>
    </ligand>
</feature>
<name>KN5B_ORYSJ</name>
<protein>
    <recommendedName>
        <fullName evidence="7">Kinesin-like protein KIN-5B</fullName>
    </recommendedName>
</protein>
<organism>
    <name type="scientific">Oryza sativa subsp. japonica</name>
    <name type="common">Rice</name>
    <dbReference type="NCBI Taxonomy" id="39947"/>
    <lineage>
        <taxon>Eukaryota</taxon>
        <taxon>Viridiplantae</taxon>
        <taxon>Streptophyta</taxon>
        <taxon>Embryophyta</taxon>
        <taxon>Tracheophyta</taxon>
        <taxon>Spermatophyta</taxon>
        <taxon>Magnoliopsida</taxon>
        <taxon>Liliopsida</taxon>
        <taxon>Poales</taxon>
        <taxon>Poaceae</taxon>
        <taxon>BOP clade</taxon>
        <taxon>Oryzoideae</taxon>
        <taxon>Oryzeae</taxon>
        <taxon>Oryzinae</taxon>
        <taxon>Oryza</taxon>
        <taxon>Oryza sativa</taxon>
    </lineage>
</organism>
<reference key="1">
    <citation type="journal article" date="2005" name="Nature">
        <title>The map-based sequence of the rice genome.</title>
        <authorList>
            <consortium name="International rice genome sequencing project (IRGSP)"/>
        </authorList>
    </citation>
    <scope>NUCLEOTIDE SEQUENCE [LARGE SCALE GENOMIC DNA]</scope>
    <source>
        <strain>cv. Nipponbare</strain>
    </source>
</reference>
<reference key="2">
    <citation type="journal article" date="2013" name="Rice">
        <title>Improvement of the Oryza sativa Nipponbare reference genome using next generation sequence and optical map data.</title>
        <authorList>
            <person name="Kawahara Y."/>
            <person name="de la Bastide M."/>
            <person name="Hamilton J.P."/>
            <person name="Kanamori H."/>
            <person name="McCombie W.R."/>
            <person name="Ouyang S."/>
            <person name="Schwartz D.C."/>
            <person name="Tanaka T."/>
            <person name="Wu J."/>
            <person name="Zhou S."/>
            <person name="Childs K.L."/>
            <person name="Davidson R.M."/>
            <person name="Lin H."/>
            <person name="Quesada-Ocampo L."/>
            <person name="Vaillancourt B."/>
            <person name="Sakai H."/>
            <person name="Lee S.S."/>
            <person name="Kim J."/>
            <person name="Numa H."/>
            <person name="Itoh T."/>
            <person name="Buell C.R."/>
            <person name="Matsumoto T."/>
        </authorList>
    </citation>
    <scope>GENOME REANNOTATION</scope>
    <source>
        <strain>cv. Nipponbare</strain>
    </source>
</reference>
<reference key="3">
    <citation type="journal article" date="2005" name="PLoS Biol.">
        <title>The genomes of Oryza sativa: a history of duplications.</title>
        <authorList>
            <person name="Yu J."/>
            <person name="Wang J."/>
            <person name="Lin W."/>
            <person name="Li S."/>
            <person name="Li H."/>
            <person name="Zhou J."/>
            <person name="Ni P."/>
            <person name="Dong W."/>
            <person name="Hu S."/>
            <person name="Zeng C."/>
            <person name="Zhang J."/>
            <person name="Zhang Y."/>
            <person name="Li R."/>
            <person name="Xu Z."/>
            <person name="Li S."/>
            <person name="Li X."/>
            <person name="Zheng H."/>
            <person name="Cong L."/>
            <person name="Lin L."/>
            <person name="Yin J."/>
            <person name="Geng J."/>
            <person name="Li G."/>
            <person name="Shi J."/>
            <person name="Liu J."/>
            <person name="Lv H."/>
            <person name="Li J."/>
            <person name="Wang J."/>
            <person name="Deng Y."/>
            <person name="Ran L."/>
            <person name="Shi X."/>
            <person name="Wang X."/>
            <person name="Wu Q."/>
            <person name="Li C."/>
            <person name="Ren X."/>
            <person name="Wang J."/>
            <person name="Wang X."/>
            <person name="Li D."/>
            <person name="Liu D."/>
            <person name="Zhang X."/>
            <person name="Ji Z."/>
            <person name="Zhao W."/>
            <person name="Sun Y."/>
            <person name="Zhang Z."/>
            <person name="Bao J."/>
            <person name="Han Y."/>
            <person name="Dong L."/>
            <person name="Ji J."/>
            <person name="Chen P."/>
            <person name="Wu S."/>
            <person name="Liu J."/>
            <person name="Xiao Y."/>
            <person name="Bu D."/>
            <person name="Tan J."/>
            <person name="Yang L."/>
            <person name="Ye C."/>
            <person name="Zhang J."/>
            <person name="Xu J."/>
            <person name="Zhou Y."/>
            <person name="Yu Y."/>
            <person name="Zhang B."/>
            <person name="Zhuang S."/>
            <person name="Wei H."/>
            <person name="Liu B."/>
            <person name="Lei M."/>
            <person name="Yu H."/>
            <person name="Li Y."/>
            <person name="Xu H."/>
            <person name="Wei S."/>
            <person name="He X."/>
            <person name="Fang L."/>
            <person name="Zhang Z."/>
            <person name="Zhang Y."/>
            <person name="Huang X."/>
            <person name="Su Z."/>
            <person name="Tong W."/>
            <person name="Li J."/>
            <person name="Tong Z."/>
            <person name="Li S."/>
            <person name="Ye J."/>
            <person name="Wang L."/>
            <person name="Fang L."/>
            <person name="Lei T."/>
            <person name="Chen C.-S."/>
            <person name="Chen H.-C."/>
            <person name="Xu Z."/>
            <person name="Li H."/>
            <person name="Huang H."/>
            <person name="Zhang F."/>
            <person name="Xu H."/>
            <person name="Li N."/>
            <person name="Zhao C."/>
            <person name="Li S."/>
            <person name="Dong L."/>
            <person name="Huang Y."/>
            <person name="Li L."/>
            <person name="Xi Y."/>
            <person name="Qi Q."/>
            <person name="Li W."/>
            <person name="Zhang B."/>
            <person name="Hu W."/>
            <person name="Zhang Y."/>
            <person name="Tian X."/>
            <person name="Jiao Y."/>
            <person name="Liang X."/>
            <person name="Jin J."/>
            <person name="Gao L."/>
            <person name="Zheng W."/>
            <person name="Hao B."/>
            <person name="Liu S.-M."/>
            <person name="Wang W."/>
            <person name="Yuan L."/>
            <person name="Cao M."/>
            <person name="McDermott J."/>
            <person name="Samudrala R."/>
            <person name="Wang J."/>
            <person name="Wong G.K.-S."/>
            <person name="Yang H."/>
        </authorList>
    </citation>
    <scope>NUCLEOTIDE SEQUENCE [LARGE SCALE GENOMIC DNA]</scope>
    <source>
        <strain>cv. Nipponbare</strain>
    </source>
</reference>
<reference key="4">
    <citation type="journal article" date="2006" name="Trends Plant Sci.">
        <title>Mitosis-specific kinesins in Arabidopsis.</title>
        <authorList>
            <person name="Vanstraelen M."/>
            <person name="Inze D."/>
            <person name="Geelen D."/>
        </authorList>
    </citation>
    <scope>REVIEW</scope>
</reference>
<reference key="5">
    <citation type="journal article" date="2009" name="Ann. Bot.">
        <title>Evaluating the microtubule cytoskeleton and its interacting proteins in monocots by mining the rice genome.</title>
        <authorList>
            <person name="Guo L."/>
            <person name="Ho C.M."/>
            <person name="Kong Z."/>
            <person name="Lee Y.R."/>
            <person name="Qian Q."/>
            <person name="Liu B."/>
        </authorList>
    </citation>
    <scope>GENE FAMILY</scope>
    <scope>NOMENCLATURE</scope>
</reference>
<comment type="function">
    <text evidence="1 2">Responsible for microtubule translocation. May be important for the organization of phragmoplast-specific arrays of microtubules (By similarity). Plays an essential role in stabilizing the mitotic spindle. Required during mitotic cytokinesis (By similarity).</text>
</comment>
<comment type="subcellular location">
    <subcellularLocation>
        <location evidence="1">Cytoplasm</location>
        <location evidence="1">Cytoskeleton</location>
    </subcellularLocation>
    <subcellularLocation>
        <location evidence="1">Cytoplasm</location>
        <location evidence="1">Cytoskeleton</location>
        <location evidence="1">Spindle</location>
    </subcellularLocation>
    <text evidence="1">Microtubule-associated.</text>
</comment>
<comment type="similarity">
    <text evidence="6">Belongs to the TRAFAC class myosin-kinesin ATPase superfamily. Kinesin family. KIN-5/BimC subfamily.</text>
</comment>
<comment type="sequence caution" evidence="7">
    <conflict type="erroneous gene model prediction">
        <sequence resource="EMBL-CDS" id="EEE58808"/>
    </conflict>
</comment>
<proteinExistence type="inferred from homology"/>
<sequence>MAQTPNPSRRSLVGPPPHPFLTPRPERRQLELRWADGGSQSSARRSGVGLTGGGGGGGGGSEMKDCEANVQVVLRCRPLSEEEQRANVQSAISCDDLKREVTVLHSLFKQADKTFTFDKVFGPKAQQRSIYDRAVKPIVKDVLEGYNCTVFAFGQTGTGKTYTMEGEMRQKASELSATAGVIPRAVRDIFDILEERKADYSMKVTFLELYNEEITDLLALEDQSRFPEDRQKRAISLMEDRKGGAVIRGLEEVVVYSASEIYNLLEHGSARRRTADTALNKQSSRSHSVFSIYIHVKETTVGNQELLKCGRLNLVDLAGSENIARSGAREGRAREAGEMNKSLLTLGRVITALVEHSVHVPYRDSKLTRLLRESLGGKAKTCIIATVSPSIHCLEETVVTLDYAYRAKSIKNKPEANQKVCKSVILKDLYQEMERMKQDVKAAREKNGIYIPQERFALEEAEKKTMRDKIEYLETQNKELKMNIESCKKEYLDLEEAHSRANISLKEKEFIISNLLHAEQSIVERAKDIRGALENASGDISALVDKLGRQSNTEAENKGLLFDFRSQLDHGLDLLHDTVVGCVCEQRQFLESMNEQNKIYFSAKSESTSQLERRIAKAKDIYASGVQCMNQLANTLHQRSIAHSEQMGLNILSHATRAANFLAVMVSEAEQVSNDVFKSISELKELLAFSADQQEVMFKRDLVSAQVMSKTSIDFFEDIRGHASRLIEHMEQSQAESSSQLLKFEEDFKELSVREEQAALDKIAGILAGLTAKKSTMVLDCVGQLNGKCREEQKHLKLQISNLQKVSDSGGKEAAAYAAKVESQFSEDKLSHCKIKDQMEDILQQSLKKTVHSVSYWSHTETSLEHLNKISVVEADDFIEETRKENESILQKMLIVSTQNDAKFAAITSDMLTAVKDSHLRDSESRMRIETVFATSSDHLEMLDTKHSQGTESIRSMTAKCLERDYKANSPVRRRPGELMTNAYSLESIEQLRTPVPDLVVKFRSENNLDEVDKGKRYVDQGTRTPRSPLMPVNHYNK</sequence>
<accession>B9F7C8</accession>
<keyword id="KW-0067">ATP-binding</keyword>
<keyword id="KW-0175">Coiled coil</keyword>
<keyword id="KW-0963">Cytoplasm</keyword>
<keyword id="KW-0206">Cytoskeleton</keyword>
<keyword id="KW-0493">Microtubule</keyword>
<keyword id="KW-0505">Motor protein</keyword>
<keyword id="KW-0547">Nucleotide-binding</keyword>
<keyword id="KW-1185">Reference proteome</keyword>